<dbReference type="EMBL" id="CP000031">
    <property type="protein sequence ID" value="AAV95352.1"/>
    <property type="molecule type" value="Genomic_DNA"/>
</dbReference>
<dbReference type="RefSeq" id="WP_011047807.1">
    <property type="nucleotide sequence ID" value="NC_003911.12"/>
</dbReference>
<dbReference type="SMR" id="Q5LRP4"/>
<dbReference type="STRING" id="246200.SPO2081"/>
<dbReference type="PaxDb" id="246200-SPO2081"/>
<dbReference type="KEGG" id="sil:SPO2081"/>
<dbReference type="eggNOG" id="COG1923">
    <property type="taxonomic scope" value="Bacteria"/>
</dbReference>
<dbReference type="HOGENOM" id="CLU_113688_0_0_5"/>
<dbReference type="OrthoDB" id="9799751at2"/>
<dbReference type="Proteomes" id="UP000001023">
    <property type="component" value="Chromosome"/>
</dbReference>
<dbReference type="GO" id="GO:0005829">
    <property type="term" value="C:cytosol"/>
    <property type="evidence" value="ECO:0007669"/>
    <property type="project" value="TreeGrafter"/>
</dbReference>
<dbReference type="GO" id="GO:0003723">
    <property type="term" value="F:RNA binding"/>
    <property type="evidence" value="ECO:0007669"/>
    <property type="project" value="UniProtKB-UniRule"/>
</dbReference>
<dbReference type="GO" id="GO:0006355">
    <property type="term" value="P:regulation of DNA-templated transcription"/>
    <property type="evidence" value="ECO:0007669"/>
    <property type="project" value="InterPro"/>
</dbReference>
<dbReference type="GO" id="GO:0043487">
    <property type="term" value="P:regulation of RNA stability"/>
    <property type="evidence" value="ECO:0007669"/>
    <property type="project" value="TreeGrafter"/>
</dbReference>
<dbReference type="GO" id="GO:0045974">
    <property type="term" value="P:regulation of translation, ncRNA-mediated"/>
    <property type="evidence" value="ECO:0007669"/>
    <property type="project" value="TreeGrafter"/>
</dbReference>
<dbReference type="CDD" id="cd01716">
    <property type="entry name" value="Hfq"/>
    <property type="match status" value="1"/>
</dbReference>
<dbReference type="FunFam" id="2.30.30.100:FF:000001">
    <property type="entry name" value="RNA-binding protein Hfq"/>
    <property type="match status" value="1"/>
</dbReference>
<dbReference type="Gene3D" id="2.30.30.100">
    <property type="match status" value="1"/>
</dbReference>
<dbReference type="HAMAP" id="MF_00436">
    <property type="entry name" value="Hfq"/>
    <property type="match status" value="1"/>
</dbReference>
<dbReference type="InterPro" id="IPR005001">
    <property type="entry name" value="Hfq"/>
</dbReference>
<dbReference type="InterPro" id="IPR010920">
    <property type="entry name" value="LSM_dom_sf"/>
</dbReference>
<dbReference type="InterPro" id="IPR047575">
    <property type="entry name" value="Sm"/>
</dbReference>
<dbReference type="NCBIfam" id="TIGR02383">
    <property type="entry name" value="Hfq"/>
    <property type="match status" value="1"/>
</dbReference>
<dbReference type="NCBIfam" id="NF001602">
    <property type="entry name" value="PRK00395.1"/>
    <property type="match status" value="1"/>
</dbReference>
<dbReference type="PANTHER" id="PTHR34772">
    <property type="entry name" value="RNA-BINDING PROTEIN HFQ"/>
    <property type="match status" value="1"/>
</dbReference>
<dbReference type="PANTHER" id="PTHR34772:SF1">
    <property type="entry name" value="RNA-BINDING PROTEIN HFQ"/>
    <property type="match status" value="1"/>
</dbReference>
<dbReference type="Pfam" id="PF17209">
    <property type="entry name" value="Hfq"/>
    <property type="match status" value="1"/>
</dbReference>
<dbReference type="SUPFAM" id="SSF50182">
    <property type="entry name" value="Sm-like ribonucleoproteins"/>
    <property type="match status" value="1"/>
</dbReference>
<dbReference type="PROSITE" id="PS52002">
    <property type="entry name" value="SM"/>
    <property type="match status" value="1"/>
</dbReference>
<name>HFQ_RUEPO</name>
<reference key="1">
    <citation type="journal article" date="2004" name="Nature">
        <title>Genome sequence of Silicibacter pomeroyi reveals adaptations to the marine environment.</title>
        <authorList>
            <person name="Moran M.A."/>
            <person name="Buchan A."/>
            <person name="Gonzalez J.M."/>
            <person name="Heidelberg J.F."/>
            <person name="Whitman W.B."/>
            <person name="Kiene R.P."/>
            <person name="Henriksen J.R."/>
            <person name="King G.M."/>
            <person name="Belas R."/>
            <person name="Fuqua C."/>
            <person name="Brinkac L.M."/>
            <person name="Lewis M."/>
            <person name="Johri S."/>
            <person name="Weaver B."/>
            <person name="Pai G."/>
            <person name="Eisen J.A."/>
            <person name="Rahe E."/>
            <person name="Sheldon W.M."/>
            <person name="Ye W."/>
            <person name="Miller T.R."/>
            <person name="Carlton J."/>
            <person name="Rasko D.A."/>
            <person name="Paulsen I.T."/>
            <person name="Ren Q."/>
            <person name="Daugherty S.C."/>
            <person name="DeBoy R.T."/>
            <person name="Dodson R.J."/>
            <person name="Durkin A.S."/>
            <person name="Madupu R."/>
            <person name="Nelson W.C."/>
            <person name="Sullivan S.A."/>
            <person name="Rosovitz M.J."/>
            <person name="Haft D.H."/>
            <person name="Selengut J."/>
            <person name="Ward N."/>
        </authorList>
    </citation>
    <scope>NUCLEOTIDE SEQUENCE [LARGE SCALE GENOMIC DNA]</scope>
    <source>
        <strain>ATCC 700808 / DSM 15171 / DSS-3</strain>
    </source>
</reference>
<reference key="2">
    <citation type="journal article" date="2014" name="Stand. Genomic Sci.">
        <title>An updated genome annotation for the model marine bacterium Ruegeria pomeroyi DSS-3.</title>
        <authorList>
            <person name="Rivers A.R."/>
            <person name="Smith C.B."/>
            <person name="Moran M.A."/>
        </authorList>
    </citation>
    <scope>GENOME REANNOTATION</scope>
    <source>
        <strain>ATCC 700808 / DSM 15171 / DSS-3</strain>
    </source>
</reference>
<gene>
    <name evidence="1" type="primary">hfq</name>
    <name type="ordered locus">SPO2081</name>
</gene>
<accession>Q5LRP4</accession>
<feature type="chain" id="PRO_0000265194" description="RNA-binding protein Hfq">
    <location>
        <begin position="1"/>
        <end position="79"/>
    </location>
</feature>
<feature type="domain" description="Sm" evidence="2">
    <location>
        <begin position="10"/>
        <end position="70"/>
    </location>
</feature>
<organism>
    <name type="scientific">Ruegeria pomeroyi (strain ATCC 700808 / DSM 15171 / DSS-3)</name>
    <name type="common">Silicibacter pomeroyi</name>
    <dbReference type="NCBI Taxonomy" id="246200"/>
    <lineage>
        <taxon>Bacteria</taxon>
        <taxon>Pseudomonadati</taxon>
        <taxon>Pseudomonadota</taxon>
        <taxon>Alphaproteobacteria</taxon>
        <taxon>Rhodobacterales</taxon>
        <taxon>Roseobacteraceae</taxon>
        <taxon>Ruegeria</taxon>
    </lineage>
</organism>
<sequence length="79" mass="8975">MASDRQNLQDAFLNHVRKTKVPVTIFLINGVKLQGVITWFDNFCVLLRRDGQSQLVYKHAISTIMPAQPISLYEGEDAN</sequence>
<keyword id="KW-1185">Reference proteome</keyword>
<keyword id="KW-0694">RNA-binding</keyword>
<keyword id="KW-0346">Stress response</keyword>
<proteinExistence type="inferred from homology"/>
<protein>
    <recommendedName>
        <fullName evidence="1">RNA-binding protein Hfq</fullName>
    </recommendedName>
</protein>
<comment type="function">
    <text evidence="1">RNA chaperone that binds small regulatory RNA (sRNAs) and mRNAs to facilitate mRNA translational regulation in response to envelope stress, environmental stress and changes in metabolite concentrations. Also binds with high specificity to tRNAs.</text>
</comment>
<comment type="subunit">
    <text evidence="1">Homohexamer.</text>
</comment>
<comment type="similarity">
    <text evidence="1">Belongs to the Hfq family.</text>
</comment>
<evidence type="ECO:0000255" key="1">
    <source>
        <dbReference type="HAMAP-Rule" id="MF_00436"/>
    </source>
</evidence>
<evidence type="ECO:0000255" key="2">
    <source>
        <dbReference type="PROSITE-ProRule" id="PRU01346"/>
    </source>
</evidence>